<comment type="miscellaneous">
    <text evidence="1">Almost completely overlaps CUE5.</text>
</comment>
<comment type="caution">
    <text evidence="2">Product of a dubious gene prediction unlikely to encode a functional protein. Because of that it is not part of the S.cerevisiae S288c complete/reference proteome set.</text>
</comment>
<name>YO041_YEAST</name>
<organism>
    <name type="scientific">Saccharomyces cerevisiae (strain ATCC 204508 / S288c)</name>
    <name type="common">Baker's yeast</name>
    <dbReference type="NCBI Taxonomy" id="559292"/>
    <lineage>
        <taxon>Eukaryota</taxon>
        <taxon>Fungi</taxon>
        <taxon>Dikarya</taxon>
        <taxon>Ascomycota</taxon>
        <taxon>Saccharomycotina</taxon>
        <taxon>Saccharomycetes</taxon>
        <taxon>Saccharomycetales</taxon>
        <taxon>Saccharomycetaceae</taxon>
        <taxon>Saccharomyces</taxon>
    </lineage>
</organism>
<sequence>MITALMYFSSKLGKASFNSCNIGFSLDGSSSDFLLAGKGGCSSSSSFASSAGVTTSSSSIPEDLFTFSSTLGVPSLAEVSLSFFPSEFRSTSVVFEISSLIDSGTLLFSRREESLIPSFSSMILIWQYRFAGGGYLTSLKLFI</sequence>
<evidence type="ECO:0000305" key="1"/>
<evidence type="ECO:0000305" key="2">
    <source>
    </source>
</evidence>
<gene>
    <name type="ordered locus">YOR041C</name>
    <name type="ORF">O2760</name>
</gene>
<accession>Q08411</accession>
<protein>
    <recommendedName>
        <fullName>Putative uncharacterized protein YOR041C</fullName>
    </recommendedName>
</protein>
<proteinExistence type="uncertain"/>
<reference key="1">
    <citation type="journal article" date="1997" name="Nature">
        <title>The nucleotide sequence of Saccharomyces cerevisiae chromosome XV.</title>
        <authorList>
            <person name="Dujon B."/>
            <person name="Albermann K."/>
            <person name="Aldea M."/>
            <person name="Alexandraki D."/>
            <person name="Ansorge W."/>
            <person name="Arino J."/>
            <person name="Benes V."/>
            <person name="Bohn C."/>
            <person name="Bolotin-Fukuhara M."/>
            <person name="Bordonne R."/>
            <person name="Boyer J."/>
            <person name="Camasses A."/>
            <person name="Casamayor A."/>
            <person name="Casas C."/>
            <person name="Cheret G."/>
            <person name="Cziepluch C."/>
            <person name="Daignan-Fornier B."/>
            <person name="Dang V.-D."/>
            <person name="de Haan M."/>
            <person name="Delius H."/>
            <person name="Durand P."/>
            <person name="Fairhead C."/>
            <person name="Feldmann H."/>
            <person name="Gaillon L."/>
            <person name="Galisson F."/>
            <person name="Gamo F.-J."/>
            <person name="Gancedo C."/>
            <person name="Goffeau A."/>
            <person name="Goulding S.E."/>
            <person name="Grivell L.A."/>
            <person name="Habbig B."/>
            <person name="Hand N.J."/>
            <person name="Hani J."/>
            <person name="Hattenhorst U."/>
            <person name="Hebling U."/>
            <person name="Hernando Y."/>
            <person name="Herrero E."/>
            <person name="Heumann K."/>
            <person name="Hiesel R."/>
            <person name="Hilger F."/>
            <person name="Hofmann B."/>
            <person name="Hollenberg C.P."/>
            <person name="Hughes B."/>
            <person name="Jauniaux J.-C."/>
            <person name="Kalogeropoulos A."/>
            <person name="Katsoulou C."/>
            <person name="Kordes E."/>
            <person name="Lafuente M.J."/>
            <person name="Landt O."/>
            <person name="Louis E.J."/>
            <person name="Maarse A.C."/>
            <person name="Madania A."/>
            <person name="Mannhaupt G."/>
            <person name="Marck C."/>
            <person name="Martin R.P."/>
            <person name="Mewes H.-W."/>
            <person name="Michaux G."/>
            <person name="Paces V."/>
            <person name="Parle-McDermott A.G."/>
            <person name="Pearson B.M."/>
            <person name="Perrin A."/>
            <person name="Pettersson B."/>
            <person name="Poch O."/>
            <person name="Pohl T.M."/>
            <person name="Poirey R."/>
            <person name="Portetelle D."/>
            <person name="Pujol A."/>
            <person name="Purnelle B."/>
            <person name="Ramezani Rad M."/>
            <person name="Rechmann S."/>
            <person name="Schwager C."/>
            <person name="Schweizer M."/>
            <person name="Sor F."/>
            <person name="Sterky F."/>
            <person name="Tarassov I.A."/>
            <person name="Teodoru C."/>
            <person name="Tettelin H."/>
            <person name="Thierry A."/>
            <person name="Tobiasch E."/>
            <person name="Tzermia M."/>
            <person name="Uhlen M."/>
            <person name="Unseld M."/>
            <person name="Valens M."/>
            <person name="Vandenbol M."/>
            <person name="Vetter I."/>
            <person name="Vlcek C."/>
            <person name="Voet M."/>
            <person name="Volckaert G."/>
            <person name="Voss H."/>
            <person name="Wambutt R."/>
            <person name="Wedler H."/>
            <person name="Wiemann S."/>
            <person name="Winsor B."/>
            <person name="Wolfe K.H."/>
            <person name="Zollner A."/>
            <person name="Zumstein E."/>
            <person name="Kleine K."/>
        </authorList>
    </citation>
    <scope>NUCLEOTIDE SEQUENCE [LARGE SCALE GENOMIC DNA]</scope>
    <source>
        <strain>ATCC 204508 / S288c</strain>
    </source>
</reference>
<reference key="2">
    <citation type="journal article" date="2014" name="G3 (Bethesda)">
        <title>The reference genome sequence of Saccharomyces cerevisiae: Then and now.</title>
        <authorList>
            <person name="Engel S.R."/>
            <person name="Dietrich F.S."/>
            <person name="Fisk D.G."/>
            <person name="Binkley G."/>
            <person name="Balakrishnan R."/>
            <person name="Costanzo M.C."/>
            <person name="Dwight S.S."/>
            <person name="Hitz B.C."/>
            <person name="Karra K."/>
            <person name="Nash R.S."/>
            <person name="Weng S."/>
            <person name="Wong E.D."/>
            <person name="Lloyd P."/>
            <person name="Skrzypek M.S."/>
            <person name="Miyasato S.R."/>
            <person name="Simison M."/>
            <person name="Cherry J.M."/>
        </authorList>
    </citation>
    <scope>GENOME REANNOTATION</scope>
    <source>
        <strain>ATCC 204508 / S288c</strain>
    </source>
</reference>
<feature type="chain" id="PRO_0000299705" description="Putative uncharacterized protein YOR041C">
    <location>
        <begin position="1"/>
        <end position="143"/>
    </location>
</feature>
<dbReference type="EMBL" id="Z74949">
    <property type="protein sequence ID" value="CAA99231.1"/>
    <property type="molecule type" value="Genomic_DNA"/>
</dbReference>
<dbReference type="PIR" id="S66915">
    <property type="entry name" value="S66915"/>
</dbReference>
<dbReference type="STRING" id="4932.YOR041C"/>
<dbReference type="PaxDb" id="4932-YOR041C"/>
<dbReference type="EnsemblFungi" id="YOR041C_mRNA">
    <property type="protein sequence ID" value="YOR041C"/>
    <property type="gene ID" value="YOR041C"/>
</dbReference>
<dbReference type="AGR" id="SGD:S000005567"/>
<dbReference type="SGD" id="S000005567">
    <property type="gene designation" value="YOR041C"/>
</dbReference>
<dbReference type="HOGENOM" id="CLU_1807727_0_0_1"/>